<gene>
    <name type="ordered locus">M1425_1359</name>
</gene>
<feature type="chain" id="PRO_1000205285" description="UPF0148 protein M1425_1359">
    <location>
        <begin position="1"/>
        <end position="118"/>
    </location>
</feature>
<name>Y1359_SACI4</name>
<sequence length="118" mass="13445">MTNESEVGVKKAAELLRQGATMLEEACPICKMPLFKLKNGDVVCPVHGKVYIVKSDDEEKIVKRNLQLDEIESILIDGLYLSAKKMKEDPLDSERIIQIIRYLDALERLRKIKINSSE</sequence>
<protein>
    <recommendedName>
        <fullName evidence="1">UPF0148 protein M1425_1359</fullName>
    </recommendedName>
</protein>
<organism>
    <name type="scientific">Saccharolobus islandicus (strain M.14.25 / Kamchatka #1)</name>
    <name type="common">Sulfolobus islandicus</name>
    <dbReference type="NCBI Taxonomy" id="427317"/>
    <lineage>
        <taxon>Archaea</taxon>
        <taxon>Thermoproteota</taxon>
        <taxon>Thermoprotei</taxon>
        <taxon>Sulfolobales</taxon>
        <taxon>Sulfolobaceae</taxon>
        <taxon>Saccharolobus</taxon>
    </lineage>
</organism>
<reference key="1">
    <citation type="journal article" date="2009" name="Proc. Natl. Acad. Sci. U.S.A.">
        <title>Biogeography of the Sulfolobus islandicus pan-genome.</title>
        <authorList>
            <person name="Reno M.L."/>
            <person name="Held N.L."/>
            <person name="Fields C.J."/>
            <person name="Burke P.V."/>
            <person name="Whitaker R.J."/>
        </authorList>
    </citation>
    <scope>NUCLEOTIDE SEQUENCE [LARGE SCALE GENOMIC DNA]</scope>
    <source>
        <strain>M.14.25 / Kamchatka #1</strain>
    </source>
</reference>
<evidence type="ECO:0000255" key="1">
    <source>
        <dbReference type="HAMAP-Rule" id="MF_00343"/>
    </source>
</evidence>
<proteinExistence type="inferred from homology"/>
<comment type="similarity">
    <text evidence="1">Belongs to the UPF0148 family.</text>
</comment>
<accession>C3MVB8</accession>
<dbReference type="EMBL" id="CP001400">
    <property type="protein sequence ID" value="ACP38113.1"/>
    <property type="molecule type" value="Genomic_DNA"/>
</dbReference>
<dbReference type="RefSeq" id="WP_010923073.1">
    <property type="nucleotide sequence ID" value="NC_012588.1"/>
</dbReference>
<dbReference type="SMR" id="C3MVB8"/>
<dbReference type="KEGG" id="sia:M1425_1359"/>
<dbReference type="HOGENOM" id="CLU_142653_1_0_2"/>
<dbReference type="Proteomes" id="UP000001350">
    <property type="component" value="Chromosome"/>
</dbReference>
<dbReference type="HAMAP" id="MF_00343">
    <property type="entry name" value="UPF0148"/>
    <property type="match status" value="1"/>
</dbReference>
<dbReference type="InterPro" id="IPR009563">
    <property type="entry name" value="SSSCA1"/>
</dbReference>
<dbReference type="InterPro" id="IPR022954">
    <property type="entry name" value="UPF0148"/>
</dbReference>
<dbReference type="NCBIfam" id="NF001644">
    <property type="entry name" value="PRK00420.1-1"/>
    <property type="match status" value="1"/>
</dbReference>
<dbReference type="NCBIfam" id="NF001647">
    <property type="entry name" value="PRK00420.1-4"/>
    <property type="match status" value="1"/>
</dbReference>
<dbReference type="Pfam" id="PF06677">
    <property type="entry name" value="Auto_anti-p27"/>
    <property type="match status" value="1"/>
</dbReference>